<dbReference type="EMBL" id="AM889285">
    <property type="protein sequence ID" value="CAP57341.1"/>
    <property type="molecule type" value="Genomic_DNA"/>
</dbReference>
<dbReference type="EMBL" id="CP001189">
    <property type="protein sequence ID" value="ACI52702.1"/>
    <property type="molecule type" value="Genomic_DNA"/>
</dbReference>
<dbReference type="RefSeq" id="WP_012227948.1">
    <property type="nucleotide sequence ID" value="NC_010125.1"/>
</dbReference>
<dbReference type="SMR" id="A9H3P5"/>
<dbReference type="STRING" id="272568.GDI3398"/>
<dbReference type="KEGG" id="gdi:GDI3398"/>
<dbReference type="KEGG" id="gdj:Gdia_2972"/>
<dbReference type="eggNOG" id="COG0092">
    <property type="taxonomic scope" value="Bacteria"/>
</dbReference>
<dbReference type="HOGENOM" id="CLU_058591_0_2_5"/>
<dbReference type="OrthoDB" id="9806396at2"/>
<dbReference type="Proteomes" id="UP000001176">
    <property type="component" value="Chromosome"/>
</dbReference>
<dbReference type="GO" id="GO:0022627">
    <property type="term" value="C:cytosolic small ribosomal subunit"/>
    <property type="evidence" value="ECO:0007669"/>
    <property type="project" value="TreeGrafter"/>
</dbReference>
<dbReference type="GO" id="GO:0003729">
    <property type="term" value="F:mRNA binding"/>
    <property type="evidence" value="ECO:0007669"/>
    <property type="project" value="UniProtKB-UniRule"/>
</dbReference>
<dbReference type="GO" id="GO:0019843">
    <property type="term" value="F:rRNA binding"/>
    <property type="evidence" value="ECO:0007669"/>
    <property type="project" value="UniProtKB-UniRule"/>
</dbReference>
<dbReference type="GO" id="GO:0003735">
    <property type="term" value="F:structural constituent of ribosome"/>
    <property type="evidence" value="ECO:0007669"/>
    <property type="project" value="InterPro"/>
</dbReference>
<dbReference type="GO" id="GO:0006412">
    <property type="term" value="P:translation"/>
    <property type="evidence" value="ECO:0007669"/>
    <property type="project" value="UniProtKB-UniRule"/>
</dbReference>
<dbReference type="CDD" id="cd02412">
    <property type="entry name" value="KH-II_30S_S3"/>
    <property type="match status" value="1"/>
</dbReference>
<dbReference type="FunFam" id="3.30.1140.32:FF:000009">
    <property type="entry name" value="30S ribosomal protein S3"/>
    <property type="match status" value="1"/>
</dbReference>
<dbReference type="FunFam" id="3.30.300.20:FF:000001">
    <property type="entry name" value="30S ribosomal protein S3"/>
    <property type="match status" value="1"/>
</dbReference>
<dbReference type="Gene3D" id="3.30.300.20">
    <property type="match status" value="1"/>
</dbReference>
<dbReference type="Gene3D" id="3.30.1140.32">
    <property type="entry name" value="Ribosomal protein S3, C-terminal domain"/>
    <property type="match status" value="1"/>
</dbReference>
<dbReference type="HAMAP" id="MF_01309_B">
    <property type="entry name" value="Ribosomal_uS3_B"/>
    <property type="match status" value="1"/>
</dbReference>
<dbReference type="InterPro" id="IPR004087">
    <property type="entry name" value="KH_dom"/>
</dbReference>
<dbReference type="InterPro" id="IPR015946">
    <property type="entry name" value="KH_dom-like_a/b"/>
</dbReference>
<dbReference type="InterPro" id="IPR004044">
    <property type="entry name" value="KH_dom_type_2"/>
</dbReference>
<dbReference type="InterPro" id="IPR009019">
    <property type="entry name" value="KH_sf_prok-type"/>
</dbReference>
<dbReference type="InterPro" id="IPR036419">
    <property type="entry name" value="Ribosomal_S3_C_sf"/>
</dbReference>
<dbReference type="InterPro" id="IPR005704">
    <property type="entry name" value="Ribosomal_uS3_bac-typ"/>
</dbReference>
<dbReference type="InterPro" id="IPR001351">
    <property type="entry name" value="Ribosomal_uS3_C"/>
</dbReference>
<dbReference type="InterPro" id="IPR018280">
    <property type="entry name" value="Ribosomal_uS3_CS"/>
</dbReference>
<dbReference type="NCBIfam" id="TIGR01009">
    <property type="entry name" value="rpsC_bact"/>
    <property type="match status" value="1"/>
</dbReference>
<dbReference type="PANTHER" id="PTHR11760">
    <property type="entry name" value="30S/40S RIBOSOMAL PROTEIN S3"/>
    <property type="match status" value="1"/>
</dbReference>
<dbReference type="PANTHER" id="PTHR11760:SF19">
    <property type="entry name" value="SMALL RIBOSOMAL SUBUNIT PROTEIN US3C"/>
    <property type="match status" value="1"/>
</dbReference>
<dbReference type="Pfam" id="PF07650">
    <property type="entry name" value="KH_2"/>
    <property type="match status" value="1"/>
</dbReference>
<dbReference type="Pfam" id="PF00189">
    <property type="entry name" value="Ribosomal_S3_C"/>
    <property type="match status" value="1"/>
</dbReference>
<dbReference type="SMART" id="SM00322">
    <property type="entry name" value="KH"/>
    <property type="match status" value="1"/>
</dbReference>
<dbReference type="SUPFAM" id="SSF54814">
    <property type="entry name" value="Prokaryotic type KH domain (KH-domain type II)"/>
    <property type="match status" value="1"/>
</dbReference>
<dbReference type="SUPFAM" id="SSF54821">
    <property type="entry name" value="Ribosomal protein S3 C-terminal domain"/>
    <property type="match status" value="1"/>
</dbReference>
<dbReference type="PROSITE" id="PS50823">
    <property type="entry name" value="KH_TYPE_2"/>
    <property type="match status" value="1"/>
</dbReference>
<dbReference type="PROSITE" id="PS00548">
    <property type="entry name" value="RIBOSOMAL_S3"/>
    <property type="match status" value="1"/>
</dbReference>
<name>RS3_GLUDA</name>
<accession>A9H3P5</accession>
<accession>B5ZIG9</accession>
<comment type="function">
    <text evidence="1">Binds the lower part of the 30S subunit head. Binds mRNA in the 70S ribosome, positioning it for translation.</text>
</comment>
<comment type="subunit">
    <text evidence="1">Part of the 30S ribosomal subunit. Forms a tight complex with proteins S10 and S14.</text>
</comment>
<comment type="similarity">
    <text evidence="1">Belongs to the universal ribosomal protein uS3 family.</text>
</comment>
<sequence>MGHKVNPIGLRLGINRTWDSRWYAGADYSRLLHDDLKLRAHLRRKLSGAGVSRVVIERPAKKPRVTIYAARPGVVIGKKGQDIDVLRKDLTRMAKTDVALNIVEIRKPEIDATLVAENIAQQLERRVAFRRAMKRAVQSAMRLGAQGIRINCGGRLGGAEIARVEWYREGRVPLHTLRADIDYGVATAKTTYGTCGVKVWIFKGEILAHDPLAQDRRAAEQAPQR</sequence>
<proteinExistence type="inferred from homology"/>
<gene>
    <name evidence="1" type="primary">rpsC</name>
    <name type="ordered locus">GDI3398</name>
    <name type="ordered locus">Gdia_2972</name>
</gene>
<reference key="1">
    <citation type="journal article" date="2009" name="BMC Genomics">
        <title>Complete genome sequence of the sugarcane nitrogen-fixing endophyte Gluconacetobacter diazotrophicus Pal5.</title>
        <authorList>
            <person name="Bertalan M."/>
            <person name="Albano R."/>
            <person name="de Padua V."/>
            <person name="Rouws L."/>
            <person name="Rojas C."/>
            <person name="Hemerly A."/>
            <person name="Teixeira K."/>
            <person name="Schwab S."/>
            <person name="Araujo J."/>
            <person name="Oliveira A."/>
            <person name="Franca L."/>
            <person name="Magalhaes V."/>
            <person name="Alqueres S."/>
            <person name="Cardoso A."/>
            <person name="Almeida W."/>
            <person name="Loureiro M.M."/>
            <person name="Nogueira E."/>
            <person name="Cidade D."/>
            <person name="Oliveira D."/>
            <person name="Simao T."/>
            <person name="Macedo J."/>
            <person name="Valadao A."/>
            <person name="Dreschsel M."/>
            <person name="Freitas F."/>
            <person name="Vidal M."/>
            <person name="Guedes H."/>
            <person name="Rodrigues E."/>
            <person name="Meneses C."/>
            <person name="Brioso P."/>
            <person name="Pozzer L."/>
            <person name="Figueiredo D."/>
            <person name="Montano H."/>
            <person name="Junior J."/>
            <person name="de Souza Filho G."/>
            <person name="Martin Quintana Flores V."/>
            <person name="Ferreira B."/>
            <person name="Branco A."/>
            <person name="Gonzalez P."/>
            <person name="Guillobel H."/>
            <person name="Lemos M."/>
            <person name="Seibel L."/>
            <person name="Macedo J."/>
            <person name="Alves-Ferreira M."/>
            <person name="Sachetto-Martins G."/>
            <person name="Coelho A."/>
            <person name="Santos E."/>
            <person name="Amaral G."/>
            <person name="Neves A."/>
            <person name="Pacheco A.B."/>
            <person name="Carvalho D."/>
            <person name="Lery L."/>
            <person name="Bisch P."/>
            <person name="Rossle S.C."/>
            <person name="Urmenyi T."/>
            <person name="Rael Pereira A."/>
            <person name="Silva R."/>
            <person name="Rondinelli E."/>
            <person name="von Kruger W."/>
            <person name="Martins O."/>
            <person name="Baldani J.I."/>
            <person name="Ferreira P.C."/>
        </authorList>
    </citation>
    <scope>NUCLEOTIDE SEQUENCE [LARGE SCALE GENOMIC DNA]</scope>
    <source>
        <strain>ATCC 49037 / DSM 5601 / CCUG 37298 / CIP 103539 / LMG 7603 / PAl5</strain>
    </source>
</reference>
<reference key="2">
    <citation type="journal article" date="2010" name="Stand. Genomic Sci.">
        <title>Two genome sequences of the same bacterial strain, Gluconacetobacter diazotrophicus PAl 5, suggest a new standard in genome sequence submission.</title>
        <authorList>
            <person name="Giongo A."/>
            <person name="Tyler H.L."/>
            <person name="Zipperer U.N."/>
            <person name="Triplett E.W."/>
        </authorList>
    </citation>
    <scope>NUCLEOTIDE SEQUENCE [LARGE SCALE GENOMIC DNA]</scope>
    <source>
        <strain>ATCC 49037 / DSM 5601 / CCUG 37298 / CIP 103539 / LMG 7603 / PAl5</strain>
    </source>
</reference>
<feature type="chain" id="PRO_1000086126" description="Small ribosomal subunit protein uS3">
    <location>
        <begin position="1"/>
        <end position="225"/>
    </location>
</feature>
<feature type="domain" description="KH type-2" evidence="1">
    <location>
        <begin position="38"/>
        <end position="106"/>
    </location>
</feature>
<organism>
    <name type="scientific">Gluconacetobacter diazotrophicus (strain ATCC 49037 / DSM 5601 / CCUG 37298 / CIP 103539 / LMG 7603 / PAl5)</name>
    <dbReference type="NCBI Taxonomy" id="272568"/>
    <lineage>
        <taxon>Bacteria</taxon>
        <taxon>Pseudomonadati</taxon>
        <taxon>Pseudomonadota</taxon>
        <taxon>Alphaproteobacteria</taxon>
        <taxon>Acetobacterales</taxon>
        <taxon>Acetobacteraceae</taxon>
        <taxon>Gluconacetobacter</taxon>
    </lineage>
</organism>
<protein>
    <recommendedName>
        <fullName evidence="1">Small ribosomal subunit protein uS3</fullName>
    </recommendedName>
    <alternativeName>
        <fullName evidence="2">30S ribosomal protein S3</fullName>
    </alternativeName>
</protein>
<evidence type="ECO:0000255" key="1">
    <source>
        <dbReference type="HAMAP-Rule" id="MF_01309"/>
    </source>
</evidence>
<evidence type="ECO:0000305" key="2"/>
<keyword id="KW-1185">Reference proteome</keyword>
<keyword id="KW-0687">Ribonucleoprotein</keyword>
<keyword id="KW-0689">Ribosomal protein</keyword>
<keyword id="KW-0694">RNA-binding</keyword>
<keyword id="KW-0699">rRNA-binding</keyword>